<sequence length="273" mass="30683">MSKLQDVIVQEMKVKKRIDSAEEIMELKQFIKNYVQSHSFIKSLVLGISGGQDSTLVGKLVQMSVNELREEGIDCTFIAVKLPYGVQKDADEVDQALRFIEPDEIVTVNIKPAVDQSVQSLKEAGIVLTDFQKGNEKARERMKVQFSIASNRQGIVVGTDHSAENITGFYTKYGDGAADIAPIFGLNKRQGRQLLAYLGAPKELYEKTPTADLEDDKPQLPDEDALGVTYEAIDNYLEGKPVTPEEQKVIENHYIRNAHKRELAYTRYTWPKS</sequence>
<feature type="chain" id="PRO_0000152198" description="NH(3)-dependent NAD(+) synthetase">
    <location>
        <begin position="1"/>
        <end position="273"/>
    </location>
</feature>
<feature type="binding site" evidence="1">
    <location>
        <begin position="47"/>
        <end position="54"/>
    </location>
    <ligand>
        <name>ATP</name>
        <dbReference type="ChEBI" id="CHEBI:30616"/>
    </ligand>
</feature>
<feature type="binding site" evidence="1">
    <location>
        <position position="53"/>
    </location>
    <ligand>
        <name>Mg(2+)</name>
        <dbReference type="ChEBI" id="CHEBI:18420"/>
    </ligand>
</feature>
<feature type="binding site" evidence="1">
    <location>
        <position position="139"/>
    </location>
    <ligand>
        <name>deamido-NAD(+)</name>
        <dbReference type="ChEBI" id="CHEBI:58437"/>
    </ligand>
</feature>
<feature type="binding site" evidence="1">
    <location>
        <position position="159"/>
    </location>
    <ligand>
        <name>ATP</name>
        <dbReference type="ChEBI" id="CHEBI:30616"/>
    </ligand>
</feature>
<feature type="binding site" evidence="1">
    <location>
        <position position="164"/>
    </location>
    <ligand>
        <name>Mg(2+)</name>
        <dbReference type="ChEBI" id="CHEBI:18420"/>
    </ligand>
</feature>
<feature type="binding site" evidence="1">
    <location>
        <position position="172"/>
    </location>
    <ligand>
        <name>deamido-NAD(+)</name>
        <dbReference type="ChEBI" id="CHEBI:58437"/>
    </ligand>
</feature>
<feature type="binding site" evidence="1">
    <location>
        <position position="179"/>
    </location>
    <ligand>
        <name>deamido-NAD(+)</name>
        <dbReference type="ChEBI" id="CHEBI:58437"/>
    </ligand>
</feature>
<feature type="binding site" evidence="1">
    <location>
        <position position="188"/>
    </location>
    <ligand>
        <name>ATP</name>
        <dbReference type="ChEBI" id="CHEBI:30616"/>
    </ligand>
</feature>
<feature type="binding site" evidence="1">
    <location>
        <position position="210"/>
    </location>
    <ligand>
        <name>ATP</name>
        <dbReference type="ChEBI" id="CHEBI:30616"/>
    </ligand>
</feature>
<feature type="binding site" evidence="1">
    <location>
        <begin position="259"/>
        <end position="260"/>
    </location>
    <ligand>
        <name>deamido-NAD(+)</name>
        <dbReference type="ChEBI" id="CHEBI:58437"/>
    </ligand>
</feature>
<name>NADE_STAAS</name>
<proteinExistence type="inferred from homology"/>
<keyword id="KW-0067">ATP-binding</keyword>
<keyword id="KW-0436">Ligase</keyword>
<keyword id="KW-0460">Magnesium</keyword>
<keyword id="KW-0479">Metal-binding</keyword>
<keyword id="KW-0520">NAD</keyword>
<keyword id="KW-0547">Nucleotide-binding</keyword>
<evidence type="ECO:0000255" key="1">
    <source>
        <dbReference type="HAMAP-Rule" id="MF_00193"/>
    </source>
</evidence>
<reference key="1">
    <citation type="journal article" date="2004" name="Proc. Natl. Acad. Sci. U.S.A.">
        <title>Complete genomes of two clinical Staphylococcus aureus strains: evidence for the rapid evolution of virulence and drug resistance.</title>
        <authorList>
            <person name="Holden M.T.G."/>
            <person name="Feil E.J."/>
            <person name="Lindsay J.A."/>
            <person name="Peacock S.J."/>
            <person name="Day N.P.J."/>
            <person name="Enright M.C."/>
            <person name="Foster T.J."/>
            <person name="Moore C.E."/>
            <person name="Hurst L."/>
            <person name="Atkin R."/>
            <person name="Barron A."/>
            <person name="Bason N."/>
            <person name="Bentley S.D."/>
            <person name="Chillingworth C."/>
            <person name="Chillingworth T."/>
            <person name="Churcher C."/>
            <person name="Clark L."/>
            <person name="Corton C."/>
            <person name="Cronin A."/>
            <person name="Doggett J."/>
            <person name="Dowd L."/>
            <person name="Feltwell T."/>
            <person name="Hance Z."/>
            <person name="Harris B."/>
            <person name="Hauser H."/>
            <person name="Holroyd S."/>
            <person name="Jagels K."/>
            <person name="James K.D."/>
            <person name="Lennard N."/>
            <person name="Line A."/>
            <person name="Mayes R."/>
            <person name="Moule S."/>
            <person name="Mungall K."/>
            <person name="Ormond D."/>
            <person name="Quail M.A."/>
            <person name="Rabbinowitsch E."/>
            <person name="Rutherford K.M."/>
            <person name="Sanders M."/>
            <person name="Sharp S."/>
            <person name="Simmonds M."/>
            <person name="Stevens K."/>
            <person name="Whitehead S."/>
            <person name="Barrell B.G."/>
            <person name="Spratt B.G."/>
            <person name="Parkhill J."/>
        </authorList>
    </citation>
    <scope>NUCLEOTIDE SEQUENCE [LARGE SCALE GENOMIC DNA]</scope>
    <source>
        <strain>MSSA476</strain>
    </source>
</reference>
<protein>
    <recommendedName>
        <fullName evidence="1">NH(3)-dependent NAD(+) synthetase</fullName>
        <ecNumber evidence="1">6.3.1.5</ecNumber>
    </recommendedName>
</protein>
<dbReference type="EC" id="6.3.1.5" evidence="1"/>
<dbReference type="EMBL" id="BX571857">
    <property type="protein sequence ID" value="CAG43641.1"/>
    <property type="molecule type" value="Genomic_DNA"/>
</dbReference>
<dbReference type="RefSeq" id="WP_000040866.1">
    <property type="nucleotide sequence ID" value="NC_002953.3"/>
</dbReference>
<dbReference type="SMR" id="Q6G820"/>
<dbReference type="KEGG" id="sas:SAS1836"/>
<dbReference type="HOGENOM" id="CLU_059327_3_0_9"/>
<dbReference type="UniPathway" id="UPA00253">
    <property type="reaction ID" value="UER00333"/>
</dbReference>
<dbReference type="GO" id="GO:0005737">
    <property type="term" value="C:cytoplasm"/>
    <property type="evidence" value="ECO:0007669"/>
    <property type="project" value="InterPro"/>
</dbReference>
<dbReference type="GO" id="GO:0005524">
    <property type="term" value="F:ATP binding"/>
    <property type="evidence" value="ECO:0007669"/>
    <property type="project" value="UniProtKB-UniRule"/>
</dbReference>
<dbReference type="GO" id="GO:0004359">
    <property type="term" value="F:glutaminase activity"/>
    <property type="evidence" value="ECO:0007669"/>
    <property type="project" value="InterPro"/>
</dbReference>
<dbReference type="GO" id="GO:0046872">
    <property type="term" value="F:metal ion binding"/>
    <property type="evidence" value="ECO:0007669"/>
    <property type="project" value="UniProtKB-KW"/>
</dbReference>
<dbReference type="GO" id="GO:0003952">
    <property type="term" value="F:NAD+ synthase (glutamine-hydrolyzing) activity"/>
    <property type="evidence" value="ECO:0007669"/>
    <property type="project" value="InterPro"/>
</dbReference>
<dbReference type="GO" id="GO:0008795">
    <property type="term" value="F:NAD+ synthase activity"/>
    <property type="evidence" value="ECO:0007669"/>
    <property type="project" value="UniProtKB-UniRule"/>
</dbReference>
<dbReference type="GO" id="GO:0009435">
    <property type="term" value="P:NAD biosynthetic process"/>
    <property type="evidence" value="ECO:0007669"/>
    <property type="project" value="UniProtKB-UniRule"/>
</dbReference>
<dbReference type="CDD" id="cd00553">
    <property type="entry name" value="NAD_synthase"/>
    <property type="match status" value="1"/>
</dbReference>
<dbReference type="FunFam" id="3.40.50.620:FF:000015">
    <property type="entry name" value="NH(3)-dependent NAD(+) synthetase"/>
    <property type="match status" value="1"/>
</dbReference>
<dbReference type="Gene3D" id="3.40.50.620">
    <property type="entry name" value="HUPs"/>
    <property type="match status" value="1"/>
</dbReference>
<dbReference type="HAMAP" id="MF_00193">
    <property type="entry name" value="NadE_ammonia_dep"/>
    <property type="match status" value="1"/>
</dbReference>
<dbReference type="InterPro" id="IPR022310">
    <property type="entry name" value="NAD/GMP_synthase"/>
</dbReference>
<dbReference type="InterPro" id="IPR003694">
    <property type="entry name" value="NAD_synthase"/>
</dbReference>
<dbReference type="InterPro" id="IPR022926">
    <property type="entry name" value="NH(3)-dep_NAD(+)_synth"/>
</dbReference>
<dbReference type="InterPro" id="IPR014729">
    <property type="entry name" value="Rossmann-like_a/b/a_fold"/>
</dbReference>
<dbReference type="NCBIfam" id="TIGR00552">
    <property type="entry name" value="nadE"/>
    <property type="match status" value="1"/>
</dbReference>
<dbReference type="NCBIfam" id="NF001979">
    <property type="entry name" value="PRK00768.1"/>
    <property type="match status" value="1"/>
</dbReference>
<dbReference type="PANTHER" id="PTHR23090">
    <property type="entry name" value="NH 3 /GLUTAMINE-DEPENDENT NAD + SYNTHETASE"/>
    <property type="match status" value="1"/>
</dbReference>
<dbReference type="PANTHER" id="PTHR23090:SF7">
    <property type="entry name" value="NH(3)-DEPENDENT NAD(+) SYNTHETASE"/>
    <property type="match status" value="1"/>
</dbReference>
<dbReference type="Pfam" id="PF02540">
    <property type="entry name" value="NAD_synthase"/>
    <property type="match status" value="1"/>
</dbReference>
<dbReference type="SUPFAM" id="SSF52402">
    <property type="entry name" value="Adenine nucleotide alpha hydrolases-like"/>
    <property type="match status" value="1"/>
</dbReference>
<gene>
    <name evidence="1" type="primary">nadE</name>
    <name type="ordered locus">SAS1836</name>
</gene>
<comment type="function">
    <text evidence="1">Catalyzes the ATP-dependent amidation of deamido-NAD to form NAD. Uses ammonia as a nitrogen source.</text>
</comment>
<comment type="catalytic activity">
    <reaction evidence="1">
        <text>deamido-NAD(+) + NH4(+) + ATP = AMP + diphosphate + NAD(+) + H(+)</text>
        <dbReference type="Rhea" id="RHEA:21188"/>
        <dbReference type="ChEBI" id="CHEBI:15378"/>
        <dbReference type="ChEBI" id="CHEBI:28938"/>
        <dbReference type="ChEBI" id="CHEBI:30616"/>
        <dbReference type="ChEBI" id="CHEBI:33019"/>
        <dbReference type="ChEBI" id="CHEBI:57540"/>
        <dbReference type="ChEBI" id="CHEBI:58437"/>
        <dbReference type="ChEBI" id="CHEBI:456215"/>
        <dbReference type="EC" id="6.3.1.5"/>
    </reaction>
</comment>
<comment type="pathway">
    <text evidence="1">Cofactor biosynthesis; NAD(+) biosynthesis; NAD(+) from deamido-NAD(+) (ammonia route): step 1/1.</text>
</comment>
<comment type="subunit">
    <text evidence="1">Homodimer.</text>
</comment>
<comment type="similarity">
    <text evidence="1">Belongs to the NAD synthetase family.</text>
</comment>
<organism>
    <name type="scientific">Staphylococcus aureus (strain MSSA476)</name>
    <dbReference type="NCBI Taxonomy" id="282459"/>
    <lineage>
        <taxon>Bacteria</taxon>
        <taxon>Bacillati</taxon>
        <taxon>Bacillota</taxon>
        <taxon>Bacilli</taxon>
        <taxon>Bacillales</taxon>
        <taxon>Staphylococcaceae</taxon>
        <taxon>Staphylococcus</taxon>
    </lineage>
</organism>
<accession>Q6G820</accession>